<reference key="1">
    <citation type="journal article" date="2008" name="PLoS ONE">
        <title>Genetic basis of virulence attenuation revealed by comparative genomic analysis of Mycobacterium tuberculosis strain H37Ra versus H37Rv.</title>
        <authorList>
            <person name="Zheng H."/>
            <person name="Lu L."/>
            <person name="Wang B."/>
            <person name="Pu S."/>
            <person name="Zhang X."/>
            <person name="Zhu G."/>
            <person name="Shi W."/>
            <person name="Zhang L."/>
            <person name="Wang H."/>
            <person name="Wang S."/>
            <person name="Zhao G."/>
            <person name="Zhang Y."/>
        </authorList>
    </citation>
    <scope>NUCLEOTIDE SEQUENCE [LARGE SCALE GENOMIC DNA]</scope>
    <source>
        <strain>ATCC 25177 / H37Ra</strain>
    </source>
</reference>
<protein>
    <recommendedName>
        <fullName>Putative S-adenosyl-L-methionine-dependent methyltransferase MRA_3827</fullName>
        <ecNumber>2.1.1.-</ecNumber>
    </recommendedName>
</protein>
<organism>
    <name type="scientific">Mycobacterium tuberculosis (strain ATCC 25177 / H37Ra)</name>
    <dbReference type="NCBI Taxonomy" id="419947"/>
    <lineage>
        <taxon>Bacteria</taxon>
        <taxon>Bacillati</taxon>
        <taxon>Actinomycetota</taxon>
        <taxon>Actinomycetes</taxon>
        <taxon>Mycobacteriales</taxon>
        <taxon>Mycobacteriaceae</taxon>
        <taxon>Mycobacterium</taxon>
        <taxon>Mycobacterium tuberculosis complex</taxon>
    </lineage>
</organism>
<sequence length="308" mass="33390">MARTDDDSWDLATGVGATATLVAAGRARAARAAQPLIDDPFAEPLVRAVGVEFLTRWATGELDAADVDDPDAAWGLQRMTTELVVRTRYFDQFFLDAAAAGVRQAVILASGLDARGYRLPWPADTTVFEVDQPRVLEFKAQTLAGLGAQPTADLRMVPADLRHDWPDALRRGGFDAAEPAAWIAEGLFGYLPPDAQNRLLDHVTDLSAPGSRLALEAFLGSADRDSARVEEMIRTATRGWREHGFHLDIWALNYAGPRHEVSGYLDNHGWRSVGTTTAQLLAAHDLPAAPALPAGLADRPNYWTCVLG</sequence>
<proteinExistence type="inferred from homology"/>
<comment type="function">
    <text evidence="1">Exhibits S-adenosyl-L-methionine-dependent methyltransferase activity.</text>
</comment>
<comment type="similarity">
    <text evidence="2">Belongs to the UPF0677 family.</text>
</comment>
<feature type="chain" id="PRO_0000361229" description="Putative S-adenosyl-L-methionine-dependent methyltransferase MRA_3827">
    <location>
        <begin position="1"/>
        <end position="308"/>
    </location>
</feature>
<feature type="binding site" evidence="1">
    <location>
        <position position="131"/>
    </location>
    <ligand>
        <name>S-adenosyl-L-methionine</name>
        <dbReference type="ChEBI" id="CHEBI:59789"/>
    </ligand>
</feature>
<feature type="binding site" evidence="1">
    <location>
        <begin position="160"/>
        <end position="161"/>
    </location>
    <ligand>
        <name>S-adenosyl-L-methionine</name>
        <dbReference type="ChEBI" id="CHEBI:59789"/>
    </ligand>
</feature>
<dbReference type="EC" id="2.1.1.-"/>
<dbReference type="EMBL" id="CP000611">
    <property type="protein sequence ID" value="ABQ75616.1"/>
    <property type="molecule type" value="Genomic_DNA"/>
</dbReference>
<dbReference type="RefSeq" id="WP_003420620.1">
    <property type="nucleotide sequence ID" value="NZ_CP016972.1"/>
</dbReference>
<dbReference type="SMR" id="A5U9B6"/>
<dbReference type="KEGG" id="mra:MRA_3827"/>
<dbReference type="eggNOG" id="COG3315">
    <property type="taxonomic scope" value="Bacteria"/>
</dbReference>
<dbReference type="HOGENOM" id="CLU_056160_2_1_11"/>
<dbReference type="Proteomes" id="UP000001988">
    <property type="component" value="Chromosome"/>
</dbReference>
<dbReference type="GO" id="GO:0008168">
    <property type="term" value="F:methyltransferase activity"/>
    <property type="evidence" value="ECO:0007669"/>
    <property type="project" value="UniProtKB-KW"/>
</dbReference>
<dbReference type="GO" id="GO:0032259">
    <property type="term" value="P:methylation"/>
    <property type="evidence" value="ECO:0007669"/>
    <property type="project" value="UniProtKB-KW"/>
</dbReference>
<dbReference type="Gene3D" id="3.40.50.150">
    <property type="entry name" value="Vaccinia Virus protein VP39"/>
    <property type="match status" value="1"/>
</dbReference>
<dbReference type="InterPro" id="IPR007213">
    <property type="entry name" value="Ppm1/Ppm2/Tcmp"/>
</dbReference>
<dbReference type="InterPro" id="IPR029063">
    <property type="entry name" value="SAM-dependent_MTases_sf"/>
</dbReference>
<dbReference type="InterPro" id="IPR011610">
    <property type="entry name" value="SAM_mthyl_Trfase_ML2640-like"/>
</dbReference>
<dbReference type="NCBIfam" id="TIGR00027">
    <property type="entry name" value="mthyl_TIGR00027"/>
    <property type="match status" value="1"/>
</dbReference>
<dbReference type="PANTHER" id="PTHR43619">
    <property type="entry name" value="S-ADENOSYL-L-METHIONINE-DEPENDENT METHYLTRANSFERASE YKTD-RELATED"/>
    <property type="match status" value="1"/>
</dbReference>
<dbReference type="PANTHER" id="PTHR43619:SF2">
    <property type="entry name" value="S-ADENOSYL-L-METHIONINE-DEPENDENT METHYLTRANSFERASES SUPERFAMILY PROTEIN"/>
    <property type="match status" value="1"/>
</dbReference>
<dbReference type="Pfam" id="PF04072">
    <property type="entry name" value="LCM"/>
    <property type="match status" value="1"/>
</dbReference>
<dbReference type="SUPFAM" id="SSF53335">
    <property type="entry name" value="S-adenosyl-L-methionine-dependent methyltransferases"/>
    <property type="match status" value="1"/>
</dbReference>
<accession>A5U9B6</accession>
<keyword id="KW-0489">Methyltransferase</keyword>
<keyword id="KW-1185">Reference proteome</keyword>
<keyword id="KW-0949">S-adenosyl-L-methionine</keyword>
<keyword id="KW-0808">Transferase</keyword>
<gene>
    <name type="ordered locus">MRA_3827</name>
</gene>
<name>Y3827_MYCTA</name>
<evidence type="ECO:0000250" key="1"/>
<evidence type="ECO:0000305" key="2"/>